<organism>
    <name type="scientific">Escherichia coli (strain K12)</name>
    <dbReference type="NCBI Taxonomy" id="83333"/>
    <lineage>
        <taxon>Bacteria</taxon>
        <taxon>Pseudomonadati</taxon>
        <taxon>Pseudomonadota</taxon>
        <taxon>Gammaproteobacteria</taxon>
        <taxon>Enterobacterales</taxon>
        <taxon>Enterobacteriaceae</taxon>
        <taxon>Escherichia</taxon>
    </lineage>
</organism>
<dbReference type="EMBL" id="U14003">
    <property type="protein sequence ID" value="AAA97230.1"/>
    <property type="status" value="ALT_INIT"/>
    <property type="molecule type" value="Genomic_DNA"/>
</dbReference>
<dbReference type="EMBL" id="U00096">
    <property type="protein sequence ID" value="AAC77290.2"/>
    <property type="molecule type" value="Genomic_DNA"/>
</dbReference>
<dbReference type="EMBL" id="AP009048">
    <property type="protein sequence ID" value="BAE78327.1"/>
    <property type="molecule type" value="Genomic_DNA"/>
</dbReference>
<dbReference type="PIR" id="S56559">
    <property type="entry name" value="S56559"/>
</dbReference>
<dbReference type="RefSeq" id="NP_418754.2">
    <property type="nucleotide sequence ID" value="NC_000913.3"/>
</dbReference>
<dbReference type="RefSeq" id="WP_000331745.1">
    <property type="nucleotide sequence ID" value="NZ_LN832404.1"/>
</dbReference>
<dbReference type="SMR" id="P39383"/>
<dbReference type="BioGRID" id="4262756">
    <property type="interactions" value="14"/>
</dbReference>
<dbReference type="FunCoup" id="P39383">
    <property type="interactions" value="142"/>
</dbReference>
<dbReference type="STRING" id="511145.b4334"/>
<dbReference type="jPOST" id="P39383"/>
<dbReference type="PaxDb" id="511145-b4334"/>
<dbReference type="EnsemblBacteria" id="AAC77290">
    <property type="protein sequence ID" value="AAC77290"/>
    <property type="gene ID" value="b4334"/>
</dbReference>
<dbReference type="GeneID" id="948837"/>
<dbReference type="KEGG" id="ecj:JW5785"/>
<dbReference type="KEGG" id="eco:b4334"/>
<dbReference type="KEGG" id="ecoc:C3026_23430"/>
<dbReference type="PATRIC" id="fig|1411691.4.peg.2353"/>
<dbReference type="EchoBASE" id="EB2461"/>
<dbReference type="eggNOG" id="COG1924">
    <property type="taxonomic scope" value="Bacteria"/>
</dbReference>
<dbReference type="HOGENOM" id="CLU_066597_0_0_6"/>
<dbReference type="InParanoid" id="P39383"/>
<dbReference type="OMA" id="GKGANYF"/>
<dbReference type="OrthoDB" id="9177882at2"/>
<dbReference type="PhylomeDB" id="P39383"/>
<dbReference type="BioCyc" id="EcoCyc:G7931-MONOMER"/>
<dbReference type="PRO" id="PR:P39383"/>
<dbReference type="Proteomes" id="UP000000625">
    <property type="component" value="Chromosome"/>
</dbReference>
<dbReference type="GO" id="GO:0051539">
    <property type="term" value="F:4 iron, 4 sulfur cluster binding"/>
    <property type="evidence" value="ECO:0007669"/>
    <property type="project" value="UniProtKB-KW"/>
</dbReference>
<dbReference type="GO" id="GO:0046872">
    <property type="term" value="F:metal ion binding"/>
    <property type="evidence" value="ECO:0007669"/>
    <property type="project" value="UniProtKB-KW"/>
</dbReference>
<dbReference type="CDD" id="cd24109">
    <property type="entry name" value="ASKHA_NBD_YjiL-like"/>
    <property type="match status" value="1"/>
</dbReference>
<dbReference type="Gene3D" id="3.30.420.40">
    <property type="match status" value="2"/>
</dbReference>
<dbReference type="InterPro" id="IPR002731">
    <property type="entry name" value="ATPase_BadF"/>
</dbReference>
<dbReference type="InterPro" id="IPR043129">
    <property type="entry name" value="ATPase_NBD"/>
</dbReference>
<dbReference type="InterPro" id="IPR008275">
    <property type="entry name" value="CoA_E_activase_dom"/>
</dbReference>
<dbReference type="InterPro" id="IPR051805">
    <property type="entry name" value="Dehydratase_Activator_Redct"/>
</dbReference>
<dbReference type="NCBIfam" id="TIGR00241">
    <property type="entry name" value="CoA_E_activ"/>
    <property type="match status" value="1"/>
</dbReference>
<dbReference type="PANTHER" id="PTHR32329:SF2">
    <property type="entry name" value="BIFUNCTIONAL PROTEIN [INCLUDES 2-HYDROXYACYL-COA DEHYDRATASE (N-TER) AND ITS ACTIVATOR DOMAIN (C_TERM)"/>
    <property type="match status" value="1"/>
</dbReference>
<dbReference type="PANTHER" id="PTHR32329">
    <property type="entry name" value="BIFUNCTIONAL PROTEIN [INCLUDES 2-HYDROXYACYL-COA DEHYDRATASE (N-TER) AND ITS ACTIVATOR DOMAIN (C_TERM)-RELATED"/>
    <property type="match status" value="1"/>
</dbReference>
<dbReference type="Pfam" id="PF01869">
    <property type="entry name" value="BcrAD_BadFG"/>
    <property type="match status" value="1"/>
</dbReference>
<dbReference type="SUPFAM" id="SSF53067">
    <property type="entry name" value="Actin-like ATPase domain"/>
    <property type="match status" value="1"/>
</dbReference>
<protein>
    <recommendedName>
        <fullName>Uncharacterized protein YjiL</fullName>
    </recommendedName>
</protein>
<comment type="cofactor">
    <cofactor evidence="2">
        <name>[4Fe-4S] cluster</name>
        <dbReference type="ChEBI" id="CHEBI:49883"/>
    </cofactor>
    <text evidence="2">Binds 1 [4Fe-4S] cluster per dimer.</text>
</comment>
<comment type="subunit">
    <text evidence="2">Homodimer.</text>
</comment>
<comment type="sequence caution" evidence="2">
    <conflict type="erroneous initiation">
        <sequence resource="EMBL-CDS" id="AAA97230"/>
    </conflict>
    <text>Extended N-terminus.</text>
</comment>
<name>YJIL_ECOLI</name>
<feature type="chain" id="PRO_0000169791" description="Uncharacterized protein YjiL">
    <location>
        <begin position="1"/>
        <end position="255"/>
    </location>
</feature>
<feature type="binding site" evidence="1">
    <location>
        <position position="122"/>
    </location>
    <ligand>
        <name>[4Fe-4S] cluster</name>
        <dbReference type="ChEBI" id="CHEBI:49883"/>
        <note>ligand shared between dimeric partners</note>
    </ligand>
</feature>
<feature type="binding site" evidence="1">
    <location>
        <position position="160"/>
    </location>
    <ligand>
        <name>[4Fe-4S] cluster</name>
        <dbReference type="ChEBI" id="CHEBI:49883"/>
        <note>ligand shared between dimeric partners</note>
    </ligand>
</feature>
<keyword id="KW-0004">4Fe-4S</keyword>
<keyword id="KW-0408">Iron</keyword>
<keyword id="KW-0411">Iron-sulfur</keyword>
<keyword id="KW-0479">Metal-binding</keyword>
<keyword id="KW-1185">Reference proteome</keyword>
<accession>P39383</accession>
<accession>Q2M5X9</accession>
<reference key="1">
    <citation type="journal article" date="1995" name="Nucleic Acids Res.">
        <title>Analysis of the Escherichia coli genome VI: DNA sequence of the region from 92.8 through 100 minutes.</title>
        <authorList>
            <person name="Burland V.D."/>
            <person name="Plunkett G. III"/>
            <person name="Sofia H.J."/>
            <person name="Daniels D.L."/>
            <person name="Blattner F.R."/>
        </authorList>
    </citation>
    <scope>NUCLEOTIDE SEQUENCE [LARGE SCALE GENOMIC DNA]</scope>
    <source>
        <strain>K12 / MG1655 / ATCC 47076</strain>
    </source>
</reference>
<reference key="2">
    <citation type="journal article" date="1997" name="Science">
        <title>The complete genome sequence of Escherichia coli K-12.</title>
        <authorList>
            <person name="Blattner F.R."/>
            <person name="Plunkett G. III"/>
            <person name="Bloch C.A."/>
            <person name="Perna N.T."/>
            <person name="Burland V."/>
            <person name="Riley M."/>
            <person name="Collado-Vides J."/>
            <person name="Glasner J.D."/>
            <person name="Rode C.K."/>
            <person name="Mayhew G.F."/>
            <person name="Gregor J."/>
            <person name="Davis N.W."/>
            <person name="Kirkpatrick H.A."/>
            <person name="Goeden M.A."/>
            <person name="Rose D.J."/>
            <person name="Mau B."/>
            <person name="Shao Y."/>
        </authorList>
    </citation>
    <scope>NUCLEOTIDE SEQUENCE [LARGE SCALE GENOMIC DNA]</scope>
    <source>
        <strain>K12 / MG1655 / ATCC 47076</strain>
    </source>
</reference>
<reference key="3">
    <citation type="journal article" date="2006" name="Mol. Syst. Biol.">
        <title>Highly accurate genome sequences of Escherichia coli K-12 strains MG1655 and W3110.</title>
        <authorList>
            <person name="Hayashi K."/>
            <person name="Morooka N."/>
            <person name="Yamamoto Y."/>
            <person name="Fujita K."/>
            <person name="Isono K."/>
            <person name="Choi S."/>
            <person name="Ohtsubo E."/>
            <person name="Baba T."/>
            <person name="Wanner B.L."/>
            <person name="Mori H."/>
            <person name="Horiuchi T."/>
        </authorList>
    </citation>
    <scope>NUCLEOTIDE SEQUENCE [LARGE SCALE GENOMIC DNA]</scope>
    <source>
        <strain>K12 / W3110 / ATCC 27325 / DSM 5911</strain>
    </source>
</reference>
<evidence type="ECO:0000255" key="1"/>
<evidence type="ECO:0000305" key="2"/>
<gene>
    <name type="primary">yjiL</name>
    <name type="ordered locus">b4334</name>
    <name type="ordered locus">JW5785</name>
</gene>
<proteinExistence type="predicted"/>
<sequence length="255" mass="27255">MAYSIGIDSGSTATKGILLADGVITRRFLVPTPFRPATAITEAWETLREGLETTPFLTLTGYGRQLVDFADKQVTEISCHGLGARFLAPATRAVIDIGGQDSKVIQLDDDGNLCDFLMNDKCAAGTGRFLEVISRTLGTSVEQLDSITENVTPHAITSMCTVFAESEAISLRSAGVAPEAILAGVINAMARRSANFIARLSCEAPILFTGGVSHCQKFARMLESHLRMPVNTHPDAQFAGAIGAAVIGQRVRTRR</sequence>